<gene>
    <name type="primary">CGA</name>
</gene>
<feature type="signal peptide" evidence="2">
    <location>
        <begin position="1"/>
        <end position="24"/>
    </location>
</feature>
<feature type="chain" id="PRO_0000042879" description="Glycoprotein hormones alpha chain">
    <location>
        <begin position="25"/>
        <end position="120"/>
    </location>
</feature>
<feature type="glycosylation site" description="N-linked (GlcNAc...) asparagine" evidence="1">
    <location>
        <position position="80"/>
    </location>
</feature>
<feature type="glycosylation site" description="N-linked (GlcNAc...) asparagine" evidence="1">
    <location>
        <position position="106"/>
    </location>
</feature>
<feature type="disulfide bond" evidence="1">
    <location>
        <begin position="35"/>
        <end position="59"/>
    </location>
</feature>
<feature type="disulfide bond" evidence="1">
    <location>
        <begin position="38"/>
        <end position="88"/>
    </location>
</feature>
<feature type="disulfide bond" evidence="1">
    <location>
        <begin position="56"/>
        <end position="110"/>
    </location>
</feature>
<feature type="disulfide bond" evidence="1">
    <location>
        <begin position="60"/>
        <end position="112"/>
    </location>
</feature>
<feature type="disulfide bond" evidence="1">
    <location>
        <begin position="87"/>
        <end position="115"/>
    </location>
</feature>
<accession>P07474</accession>
<accession>Q9BGA0</accession>
<comment type="function">
    <text evidence="1">Shared alpha chain of the active heterodimeric glycoprotein hormones thyrotropin/thyroid stimulating hormone/TSH, lutropin/luteinizing hormone/LH and follitropin/follicle stimulating hormone/FSH. These hormones bind specific receptors on target cells that in turn activate downstream signaling pathways.</text>
</comment>
<comment type="subunit">
    <text evidence="1">Heterodimer. The active hormones thyrotropin, lutropin and follitropin are heterodimers composed of CGA, a common alpha chain described here and a unique beta chain which confers their biological specificity to the hormones: TSHB for thyrotropin, LHB for lutropin and FSHB for follitropin.</text>
</comment>
<comment type="subcellular location">
    <subcellularLocation>
        <location evidence="1">Secreted</location>
    </subcellularLocation>
</comment>
<comment type="similarity">
    <text evidence="3">Belongs to the glycoprotein hormones subunit alpha family.</text>
</comment>
<keyword id="KW-0903">Direct protein sequencing</keyword>
<keyword id="KW-1015">Disulfide bond</keyword>
<keyword id="KW-0325">Glycoprotein</keyword>
<keyword id="KW-0372">Hormone</keyword>
<keyword id="KW-1185">Reference proteome</keyword>
<keyword id="KW-0964">Secreted</keyword>
<keyword id="KW-0732">Signal</keyword>
<name>GLHA_RABIT</name>
<dbReference type="EMBL" id="AF318299">
    <property type="protein sequence ID" value="AAK06653.1"/>
    <property type="molecule type" value="mRNA"/>
</dbReference>
<dbReference type="PIR" id="A05096">
    <property type="entry name" value="A05096"/>
</dbReference>
<dbReference type="RefSeq" id="NP_001076193.1">
    <property type="nucleotide sequence ID" value="NM_001082724.1"/>
</dbReference>
<dbReference type="RefSeq" id="XP_008260942.1">
    <property type="nucleotide sequence ID" value="XM_008262720.4"/>
</dbReference>
<dbReference type="SMR" id="P07474"/>
<dbReference type="FunCoup" id="P07474">
    <property type="interactions" value="46"/>
</dbReference>
<dbReference type="STRING" id="9986.ENSOCUP00000007243"/>
<dbReference type="GlyCosmos" id="P07474">
    <property type="glycosylation" value="2 sites, No reported glycans"/>
</dbReference>
<dbReference type="PaxDb" id="9986-ENSOCUP00000007243"/>
<dbReference type="Ensembl" id="ENSOCUT00000008384.2">
    <property type="protein sequence ID" value="ENSOCUP00000007243.2"/>
    <property type="gene ID" value="ENSOCUG00000008386.2"/>
</dbReference>
<dbReference type="GeneID" id="100009481"/>
<dbReference type="KEGG" id="ocu:100009481"/>
<dbReference type="CTD" id="1081"/>
<dbReference type="eggNOG" id="ENOG502S1PK">
    <property type="taxonomic scope" value="Eukaryota"/>
</dbReference>
<dbReference type="GeneTree" id="ENSGT00390000012242"/>
<dbReference type="HOGENOM" id="CLU_148106_0_0_1"/>
<dbReference type="InParanoid" id="P07474"/>
<dbReference type="OMA" id="VKNHTDC"/>
<dbReference type="OrthoDB" id="9852859at2759"/>
<dbReference type="TreeFam" id="TF332733"/>
<dbReference type="Proteomes" id="UP000001811">
    <property type="component" value="Chromosome 12"/>
</dbReference>
<dbReference type="Bgee" id="ENSOCUG00000008386">
    <property type="expression patterns" value="Expressed in ovary and 1 other cell type or tissue"/>
</dbReference>
<dbReference type="ExpressionAtlas" id="P07474">
    <property type="expression patterns" value="baseline"/>
</dbReference>
<dbReference type="GO" id="GO:0005615">
    <property type="term" value="C:extracellular space"/>
    <property type="evidence" value="ECO:0000250"/>
    <property type="project" value="UniProtKB"/>
</dbReference>
<dbReference type="GO" id="GO:0016914">
    <property type="term" value="C:follicle-stimulating hormone complex"/>
    <property type="evidence" value="ECO:0000250"/>
    <property type="project" value="UniProtKB"/>
</dbReference>
<dbReference type="GO" id="GO:0016913">
    <property type="term" value="F:follicle-stimulating hormone activity"/>
    <property type="evidence" value="ECO:0000250"/>
    <property type="project" value="UniProtKB"/>
</dbReference>
<dbReference type="GO" id="GO:0007186">
    <property type="term" value="P:G protein-coupled receptor signaling pathway"/>
    <property type="evidence" value="ECO:0000250"/>
    <property type="project" value="UniProtKB"/>
</dbReference>
<dbReference type="GO" id="GO:0010893">
    <property type="term" value="P:positive regulation of steroid biosynthetic process"/>
    <property type="evidence" value="ECO:0000250"/>
    <property type="project" value="UniProtKB"/>
</dbReference>
<dbReference type="GO" id="GO:0010469">
    <property type="term" value="P:regulation of signaling receptor activity"/>
    <property type="evidence" value="ECO:0000250"/>
    <property type="project" value="UniProtKB"/>
</dbReference>
<dbReference type="GO" id="GO:0006590">
    <property type="term" value="P:thyroid hormone generation"/>
    <property type="evidence" value="ECO:0007669"/>
    <property type="project" value="TreeGrafter"/>
</dbReference>
<dbReference type="FunFam" id="2.10.90.10:FF:000011">
    <property type="entry name" value="Glycoprotein hormones alpha chain"/>
    <property type="match status" value="1"/>
</dbReference>
<dbReference type="Gene3D" id="2.10.90.10">
    <property type="entry name" value="Cystine-knot cytokines"/>
    <property type="match status" value="1"/>
</dbReference>
<dbReference type="InterPro" id="IPR029034">
    <property type="entry name" value="Cystine-knot_cytokine"/>
</dbReference>
<dbReference type="InterPro" id="IPR000476">
    <property type="entry name" value="Glyco_hormone"/>
</dbReference>
<dbReference type="PANTHER" id="PTHR11509">
    <property type="entry name" value="GLYCOPROTEIN HORMONE ALPHA CHAIN"/>
    <property type="match status" value="1"/>
</dbReference>
<dbReference type="PANTHER" id="PTHR11509:SF0">
    <property type="entry name" value="GLYCOPROTEIN HORMONES ALPHA CHAIN"/>
    <property type="match status" value="1"/>
</dbReference>
<dbReference type="Pfam" id="PF00236">
    <property type="entry name" value="Hormone_6"/>
    <property type="match status" value="1"/>
</dbReference>
<dbReference type="PRINTS" id="PR00274">
    <property type="entry name" value="GLYCOHORMONE"/>
</dbReference>
<dbReference type="SMART" id="SM00067">
    <property type="entry name" value="GHA"/>
    <property type="match status" value="1"/>
</dbReference>
<dbReference type="SUPFAM" id="SSF57501">
    <property type="entry name" value="Cystine-knot cytokines"/>
    <property type="match status" value="1"/>
</dbReference>
<dbReference type="PROSITE" id="PS00779">
    <property type="entry name" value="GLYCO_HORMONE_ALPHA_1"/>
    <property type="match status" value="1"/>
</dbReference>
<dbReference type="PROSITE" id="PS00780">
    <property type="entry name" value="GLYCO_HORMONE_ALPHA_2"/>
    <property type="match status" value="1"/>
</dbReference>
<dbReference type="PROSITE" id="PS50277">
    <property type="entry name" value="GLYCO_HORMONE_ALPHA_3"/>
    <property type="match status" value="1"/>
</dbReference>
<reference key="1">
    <citation type="journal article" date="2002" name="Mol. Reprod. Dev.">
        <title>Comparison of glycoprotein hormone alpha-subunits of laboratory animals.</title>
        <authorList>
            <person name="Suzuki O."/>
            <person name="Mochida K."/>
            <person name="Yamamoto Y."/>
            <person name="Noguchi Y."/>
            <person name="Takano K."/>
            <person name="Matsuda J."/>
            <person name="Ogura A."/>
        </authorList>
    </citation>
    <scope>NUCLEOTIDE SEQUENCE [MRNA]</scope>
    <source>
        <strain>Japanese white</strain>
        <tissue>Pituitary</tissue>
    </source>
</reference>
<reference key="2">
    <citation type="journal article" date="1984" name="J. Protein Chem.">
        <title>The amino acid sequence of the rabbit glycoprotein hormone alpha subunit.</title>
        <authorList>
            <person name="Glenn S.D."/>
            <person name="Nahm H.S."/>
            <person name="Ward D.N."/>
        </authorList>
    </citation>
    <scope>PROTEIN SEQUENCE OF 25-120</scope>
</reference>
<protein>
    <recommendedName>
        <fullName>Glycoprotein hormones alpha chain</fullName>
    </recommendedName>
    <alternativeName>
        <fullName>Anterior pituitary glycoprotein hormones common subunit alpha</fullName>
    </alternativeName>
    <alternativeName>
        <fullName>Follicle-stimulating hormone alpha chain</fullName>
        <shortName>FSH-alpha</shortName>
    </alternativeName>
    <alternativeName>
        <fullName>Follitropin alpha chain</fullName>
    </alternativeName>
    <alternativeName>
        <fullName>Luteinizing hormone alpha chain</fullName>
        <shortName>LSH-alpha</shortName>
    </alternativeName>
    <alternativeName>
        <fullName>Lutropin alpha chain</fullName>
    </alternativeName>
    <alternativeName>
        <fullName>Thyroid-stimulating hormone alpha chain</fullName>
        <shortName>TSH-alpha</shortName>
    </alternativeName>
    <alternativeName>
        <fullName>Thyrotropin alpha chain</fullName>
    </alternativeName>
</protein>
<organism>
    <name type="scientific">Oryctolagus cuniculus</name>
    <name type="common">Rabbit</name>
    <dbReference type="NCBI Taxonomy" id="9986"/>
    <lineage>
        <taxon>Eukaryota</taxon>
        <taxon>Metazoa</taxon>
        <taxon>Chordata</taxon>
        <taxon>Craniata</taxon>
        <taxon>Vertebrata</taxon>
        <taxon>Euteleostomi</taxon>
        <taxon>Mammalia</taxon>
        <taxon>Eutheria</taxon>
        <taxon>Euarchontoglires</taxon>
        <taxon>Glires</taxon>
        <taxon>Lagomorpha</taxon>
        <taxon>Leporidae</taxon>
        <taxon>Oryctolagus</taxon>
    </lineage>
</organism>
<proteinExistence type="evidence at protein level"/>
<sequence>MGYYRKYAAVILATLSVFLHILHSFPDGEFAMQGCPECKLKENKYFSKLGAPIYQCMGCCFSRAYPTPARSKKTMLVPKNITSEATCCVAKAFTKATVMGNAKVENHTECHCSTCYYHKS</sequence>
<evidence type="ECO:0000250" key="1">
    <source>
        <dbReference type="UniProtKB" id="P01215"/>
    </source>
</evidence>
<evidence type="ECO:0000269" key="2">
    <source ref="2"/>
</evidence>
<evidence type="ECO:0000305" key="3"/>